<proteinExistence type="inferred from homology"/>
<accession>Q7V9I2</accession>
<reference key="1">
    <citation type="journal article" date="2003" name="Proc. Natl. Acad. Sci. U.S.A.">
        <title>Genome sequence of the cyanobacterium Prochlorococcus marinus SS120, a nearly minimal oxyphototrophic genome.</title>
        <authorList>
            <person name="Dufresne A."/>
            <person name="Salanoubat M."/>
            <person name="Partensky F."/>
            <person name="Artiguenave F."/>
            <person name="Axmann I.M."/>
            <person name="Barbe V."/>
            <person name="Duprat S."/>
            <person name="Galperin M.Y."/>
            <person name="Koonin E.V."/>
            <person name="Le Gall F."/>
            <person name="Makarova K.S."/>
            <person name="Ostrowski M."/>
            <person name="Oztas S."/>
            <person name="Robert C."/>
            <person name="Rogozin I.B."/>
            <person name="Scanlan D.J."/>
            <person name="Tandeau de Marsac N."/>
            <person name="Weissenbach J."/>
            <person name="Wincker P."/>
            <person name="Wolf Y.I."/>
            <person name="Hess W.R."/>
        </authorList>
    </citation>
    <scope>NUCLEOTIDE SEQUENCE [LARGE SCALE GENOMIC DNA]</scope>
    <source>
        <strain>SARG / CCMP1375 / SS120</strain>
    </source>
</reference>
<protein>
    <recommendedName>
        <fullName evidence="1">Aminomethyltransferase</fullName>
        <ecNumber evidence="1">2.1.2.10</ecNumber>
    </recommendedName>
    <alternativeName>
        <fullName evidence="1">Glycine cleavage system T protein</fullName>
    </alternativeName>
</protein>
<comment type="function">
    <text evidence="1">The glycine cleavage system catalyzes the degradation of glycine.</text>
</comment>
<comment type="catalytic activity">
    <reaction evidence="1">
        <text>N(6)-[(R)-S(8)-aminomethyldihydrolipoyl]-L-lysyl-[protein] + (6S)-5,6,7,8-tetrahydrofolate = N(6)-[(R)-dihydrolipoyl]-L-lysyl-[protein] + (6R)-5,10-methylene-5,6,7,8-tetrahydrofolate + NH4(+)</text>
        <dbReference type="Rhea" id="RHEA:16945"/>
        <dbReference type="Rhea" id="RHEA-COMP:10475"/>
        <dbReference type="Rhea" id="RHEA-COMP:10492"/>
        <dbReference type="ChEBI" id="CHEBI:15636"/>
        <dbReference type="ChEBI" id="CHEBI:28938"/>
        <dbReference type="ChEBI" id="CHEBI:57453"/>
        <dbReference type="ChEBI" id="CHEBI:83100"/>
        <dbReference type="ChEBI" id="CHEBI:83143"/>
        <dbReference type="EC" id="2.1.2.10"/>
    </reaction>
</comment>
<comment type="subunit">
    <text evidence="1">The glycine cleavage system is composed of four proteins: P, T, L and H.</text>
</comment>
<comment type="similarity">
    <text evidence="1">Belongs to the GcvT family.</text>
</comment>
<gene>
    <name evidence="1" type="primary">gcvT</name>
    <name type="ordered locus">Pro_1851</name>
</gene>
<dbReference type="EC" id="2.1.2.10" evidence="1"/>
<dbReference type="EMBL" id="AE017126">
    <property type="protein sequence ID" value="AAQ00895.1"/>
    <property type="molecule type" value="Genomic_DNA"/>
</dbReference>
<dbReference type="RefSeq" id="NP_876242.1">
    <property type="nucleotide sequence ID" value="NC_005042.1"/>
</dbReference>
<dbReference type="RefSeq" id="WP_011126000.1">
    <property type="nucleotide sequence ID" value="NC_005042.1"/>
</dbReference>
<dbReference type="SMR" id="Q7V9I2"/>
<dbReference type="STRING" id="167539.Pro_1851"/>
<dbReference type="EnsemblBacteria" id="AAQ00895">
    <property type="protein sequence ID" value="AAQ00895"/>
    <property type="gene ID" value="Pro_1851"/>
</dbReference>
<dbReference type="KEGG" id="pma:Pro_1851"/>
<dbReference type="PATRIC" id="fig|167539.5.peg.1953"/>
<dbReference type="eggNOG" id="COG0404">
    <property type="taxonomic scope" value="Bacteria"/>
</dbReference>
<dbReference type="HOGENOM" id="CLU_007884_10_2_3"/>
<dbReference type="OrthoDB" id="9774591at2"/>
<dbReference type="Proteomes" id="UP000001420">
    <property type="component" value="Chromosome"/>
</dbReference>
<dbReference type="GO" id="GO:0005829">
    <property type="term" value="C:cytosol"/>
    <property type="evidence" value="ECO:0007669"/>
    <property type="project" value="TreeGrafter"/>
</dbReference>
<dbReference type="GO" id="GO:0005960">
    <property type="term" value="C:glycine cleavage complex"/>
    <property type="evidence" value="ECO:0007669"/>
    <property type="project" value="InterPro"/>
</dbReference>
<dbReference type="GO" id="GO:0004047">
    <property type="term" value="F:aminomethyltransferase activity"/>
    <property type="evidence" value="ECO:0007669"/>
    <property type="project" value="UniProtKB-UniRule"/>
</dbReference>
<dbReference type="GO" id="GO:0008483">
    <property type="term" value="F:transaminase activity"/>
    <property type="evidence" value="ECO:0007669"/>
    <property type="project" value="UniProtKB-KW"/>
</dbReference>
<dbReference type="GO" id="GO:0019464">
    <property type="term" value="P:glycine decarboxylation via glycine cleavage system"/>
    <property type="evidence" value="ECO:0007669"/>
    <property type="project" value="UniProtKB-UniRule"/>
</dbReference>
<dbReference type="FunFam" id="2.40.30.110:FF:000003">
    <property type="entry name" value="Aminomethyltransferase"/>
    <property type="match status" value="1"/>
</dbReference>
<dbReference type="FunFam" id="3.30.70.1400:FF:000001">
    <property type="entry name" value="Aminomethyltransferase"/>
    <property type="match status" value="1"/>
</dbReference>
<dbReference type="FunFam" id="4.10.1250.10:FF:000001">
    <property type="entry name" value="Aminomethyltransferase"/>
    <property type="match status" value="1"/>
</dbReference>
<dbReference type="Gene3D" id="2.40.30.110">
    <property type="entry name" value="Aminomethyltransferase beta-barrel domains"/>
    <property type="match status" value="1"/>
</dbReference>
<dbReference type="Gene3D" id="3.30.70.1400">
    <property type="entry name" value="Aminomethyltransferase beta-barrel domains"/>
    <property type="match status" value="1"/>
</dbReference>
<dbReference type="Gene3D" id="4.10.1250.10">
    <property type="entry name" value="Aminomethyltransferase fragment"/>
    <property type="match status" value="1"/>
</dbReference>
<dbReference type="Gene3D" id="3.30.1360.120">
    <property type="entry name" value="Probable tRNA modification gtpase trme, domain 1"/>
    <property type="match status" value="1"/>
</dbReference>
<dbReference type="HAMAP" id="MF_00259">
    <property type="entry name" value="GcvT"/>
    <property type="match status" value="1"/>
</dbReference>
<dbReference type="InterPro" id="IPR006223">
    <property type="entry name" value="GCS_T"/>
</dbReference>
<dbReference type="InterPro" id="IPR022903">
    <property type="entry name" value="GCS_T_bac"/>
</dbReference>
<dbReference type="InterPro" id="IPR013977">
    <property type="entry name" value="GCST_C"/>
</dbReference>
<dbReference type="InterPro" id="IPR006222">
    <property type="entry name" value="GCV_T_N"/>
</dbReference>
<dbReference type="InterPro" id="IPR028896">
    <property type="entry name" value="GcvT/YgfZ/DmdA"/>
</dbReference>
<dbReference type="InterPro" id="IPR029043">
    <property type="entry name" value="GcvT/YgfZ_C"/>
</dbReference>
<dbReference type="InterPro" id="IPR027266">
    <property type="entry name" value="TrmE/GcvT_dom1"/>
</dbReference>
<dbReference type="NCBIfam" id="TIGR00528">
    <property type="entry name" value="gcvT"/>
    <property type="match status" value="1"/>
</dbReference>
<dbReference type="NCBIfam" id="NF001567">
    <property type="entry name" value="PRK00389.1"/>
    <property type="match status" value="1"/>
</dbReference>
<dbReference type="PANTHER" id="PTHR43757">
    <property type="entry name" value="AMINOMETHYLTRANSFERASE"/>
    <property type="match status" value="1"/>
</dbReference>
<dbReference type="PANTHER" id="PTHR43757:SF2">
    <property type="entry name" value="AMINOMETHYLTRANSFERASE, MITOCHONDRIAL"/>
    <property type="match status" value="1"/>
</dbReference>
<dbReference type="Pfam" id="PF01571">
    <property type="entry name" value="GCV_T"/>
    <property type="match status" value="1"/>
</dbReference>
<dbReference type="Pfam" id="PF08669">
    <property type="entry name" value="GCV_T_C"/>
    <property type="match status" value="1"/>
</dbReference>
<dbReference type="PIRSF" id="PIRSF006487">
    <property type="entry name" value="GcvT"/>
    <property type="match status" value="1"/>
</dbReference>
<dbReference type="SUPFAM" id="SSF101790">
    <property type="entry name" value="Aminomethyltransferase beta-barrel domain"/>
    <property type="match status" value="1"/>
</dbReference>
<dbReference type="SUPFAM" id="SSF103025">
    <property type="entry name" value="Folate-binding domain"/>
    <property type="match status" value="1"/>
</dbReference>
<evidence type="ECO:0000255" key="1">
    <source>
        <dbReference type="HAMAP-Rule" id="MF_00259"/>
    </source>
</evidence>
<keyword id="KW-0032">Aminotransferase</keyword>
<keyword id="KW-1185">Reference proteome</keyword>
<keyword id="KW-0808">Transferase</keyword>
<feature type="chain" id="PRO_0000122583" description="Aminomethyltransferase">
    <location>
        <begin position="1"/>
        <end position="373"/>
    </location>
</feature>
<sequence length="373" mass="40918">MKSKNTPLYETCLNEGARMVEFAGWNMPIQFSGLINEHNAVRKNSGIFDISHMGVFSIQGKNPKDALQTLVPSDLHRIGPGEACYTVLLNNDGGIIDDLIVYDLGTNDPNNEECILIVINAGCTQADIDWIKEHLSDKNLKVCNAKGDGVLLALQGPDSTNQLRNVLGESLTNIPKFGHREIQVQLKTHPVSFSIFIARTGYTGEDGYEILLNTNAGKSLWRELIENGVTPCGLGARDTLRLEAGMPLYGNDINNTTTPFEAGLGWLVHLETPDEFIGKAALVKQTNEGINKKLVALKIEGRAIARKGYQIMFKNKFVGEITSGSWSPTLNEGIALAYLPIDLTKIGTAVSVQIRDKLHTAIVAKKPFYRRVS</sequence>
<organism>
    <name type="scientific">Prochlorococcus marinus (strain SARG / CCMP1375 / SS120)</name>
    <dbReference type="NCBI Taxonomy" id="167539"/>
    <lineage>
        <taxon>Bacteria</taxon>
        <taxon>Bacillati</taxon>
        <taxon>Cyanobacteriota</taxon>
        <taxon>Cyanophyceae</taxon>
        <taxon>Synechococcales</taxon>
        <taxon>Prochlorococcaceae</taxon>
        <taxon>Prochlorococcus</taxon>
    </lineage>
</organism>
<name>GCST_PROMA</name>